<evidence type="ECO:0000255" key="1">
    <source>
        <dbReference type="HAMAP-Rule" id="MF_00391"/>
    </source>
</evidence>
<evidence type="ECO:0000305" key="2"/>
<feature type="chain" id="PRO_0000187428" description="Large ribosomal subunit protein bL34">
    <location>
        <begin position="1"/>
        <end position="44"/>
    </location>
</feature>
<comment type="similarity">
    <text evidence="1">Belongs to the bacterial ribosomal protein bL34 family.</text>
</comment>
<gene>
    <name evidence="1" type="primary">rpmH</name>
    <name type="ordered locus">NE0390</name>
</gene>
<proteinExistence type="inferred from homology"/>
<dbReference type="EMBL" id="AL954747">
    <property type="protein sequence ID" value="CAD84301.1"/>
    <property type="molecule type" value="Genomic_DNA"/>
</dbReference>
<dbReference type="RefSeq" id="WP_011111025.1">
    <property type="nucleotide sequence ID" value="NC_004757.1"/>
</dbReference>
<dbReference type="SMR" id="Q82X98"/>
<dbReference type="STRING" id="228410.NE0390"/>
<dbReference type="GeneID" id="87105707"/>
<dbReference type="KEGG" id="neu:NE0390"/>
<dbReference type="eggNOG" id="COG0230">
    <property type="taxonomic scope" value="Bacteria"/>
</dbReference>
<dbReference type="HOGENOM" id="CLU_129938_2_0_4"/>
<dbReference type="Proteomes" id="UP000001416">
    <property type="component" value="Chromosome"/>
</dbReference>
<dbReference type="GO" id="GO:1990904">
    <property type="term" value="C:ribonucleoprotein complex"/>
    <property type="evidence" value="ECO:0007669"/>
    <property type="project" value="UniProtKB-KW"/>
</dbReference>
<dbReference type="GO" id="GO:0005840">
    <property type="term" value="C:ribosome"/>
    <property type="evidence" value="ECO:0007669"/>
    <property type="project" value="UniProtKB-KW"/>
</dbReference>
<dbReference type="GO" id="GO:0003735">
    <property type="term" value="F:structural constituent of ribosome"/>
    <property type="evidence" value="ECO:0007669"/>
    <property type="project" value="InterPro"/>
</dbReference>
<dbReference type="GO" id="GO:0006412">
    <property type="term" value="P:translation"/>
    <property type="evidence" value="ECO:0007669"/>
    <property type="project" value="UniProtKB-UniRule"/>
</dbReference>
<dbReference type="FunFam" id="1.10.287.3980:FF:000001">
    <property type="entry name" value="Mitochondrial ribosomal protein L34"/>
    <property type="match status" value="1"/>
</dbReference>
<dbReference type="Gene3D" id="1.10.287.3980">
    <property type="match status" value="1"/>
</dbReference>
<dbReference type="HAMAP" id="MF_00391">
    <property type="entry name" value="Ribosomal_bL34"/>
    <property type="match status" value="1"/>
</dbReference>
<dbReference type="InterPro" id="IPR000271">
    <property type="entry name" value="Ribosomal_bL34"/>
</dbReference>
<dbReference type="InterPro" id="IPR020939">
    <property type="entry name" value="Ribosomal_bL34_CS"/>
</dbReference>
<dbReference type="NCBIfam" id="TIGR01030">
    <property type="entry name" value="rpmH_bact"/>
    <property type="match status" value="1"/>
</dbReference>
<dbReference type="PANTHER" id="PTHR14503:SF4">
    <property type="entry name" value="LARGE RIBOSOMAL SUBUNIT PROTEIN BL34M"/>
    <property type="match status" value="1"/>
</dbReference>
<dbReference type="PANTHER" id="PTHR14503">
    <property type="entry name" value="MITOCHONDRIAL RIBOSOMAL PROTEIN 34 FAMILY MEMBER"/>
    <property type="match status" value="1"/>
</dbReference>
<dbReference type="Pfam" id="PF00468">
    <property type="entry name" value="Ribosomal_L34"/>
    <property type="match status" value="1"/>
</dbReference>
<dbReference type="PROSITE" id="PS00784">
    <property type="entry name" value="RIBOSOMAL_L34"/>
    <property type="match status" value="1"/>
</dbReference>
<sequence>MKRTYQPSVISRKRTHGFRVRMKTRGGRAVIRARRAKGRAKLSV</sequence>
<organism>
    <name type="scientific">Nitrosomonas europaea (strain ATCC 19718 / CIP 103999 / KCTC 2705 / NBRC 14298)</name>
    <dbReference type="NCBI Taxonomy" id="228410"/>
    <lineage>
        <taxon>Bacteria</taxon>
        <taxon>Pseudomonadati</taxon>
        <taxon>Pseudomonadota</taxon>
        <taxon>Betaproteobacteria</taxon>
        <taxon>Nitrosomonadales</taxon>
        <taxon>Nitrosomonadaceae</taxon>
        <taxon>Nitrosomonas</taxon>
    </lineage>
</organism>
<reference key="1">
    <citation type="journal article" date="2003" name="J. Bacteriol.">
        <title>Complete genome sequence of the ammonia-oxidizing bacterium and obligate chemolithoautotroph Nitrosomonas europaea.</title>
        <authorList>
            <person name="Chain P."/>
            <person name="Lamerdin J.E."/>
            <person name="Larimer F.W."/>
            <person name="Regala W."/>
            <person name="Lao V."/>
            <person name="Land M.L."/>
            <person name="Hauser L."/>
            <person name="Hooper A.B."/>
            <person name="Klotz M.G."/>
            <person name="Norton J."/>
            <person name="Sayavedra-Soto L.A."/>
            <person name="Arciero D.M."/>
            <person name="Hommes N.G."/>
            <person name="Whittaker M.M."/>
            <person name="Arp D.J."/>
        </authorList>
    </citation>
    <scope>NUCLEOTIDE SEQUENCE [LARGE SCALE GENOMIC DNA]</scope>
    <source>
        <strain>ATCC 19718 / CIP 103999 / KCTC 2705 / NBRC 14298</strain>
    </source>
</reference>
<name>RL34_NITEU</name>
<accession>Q82X98</accession>
<protein>
    <recommendedName>
        <fullName evidence="1">Large ribosomal subunit protein bL34</fullName>
    </recommendedName>
    <alternativeName>
        <fullName evidence="2">50S ribosomal protein L34</fullName>
    </alternativeName>
</protein>
<keyword id="KW-1185">Reference proteome</keyword>
<keyword id="KW-0687">Ribonucleoprotein</keyword>
<keyword id="KW-0689">Ribosomal protein</keyword>